<dbReference type="EMBL" id="AC010871">
    <property type="protein sequence ID" value="AAF07830.1"/>
    <property type="status" value="ALT_SEQ"/>
    <property type="molecule type" value="Genomic_DNA"/>
</dbReference>
<dbReference type="EMBL" id="CP002686">
    <property type="protein sequence ID" value="AEE74701.1"/>
    <property type="molecule type" value="Genomic_DNA"/>
</dbReference>
<dbReference type="EMBL" id="AY070393">
    <property type="protein sequence ID" value="AAL49889.1"/>
    <property type="molecule type" value="mRNA"/>
</dbReference>
<dbReference type="EMBL" id="AY096736">
    <property type="protein sequence ID" value="AAM20370.1"/>
    <property type="molecule type" value="mRNA"/>
</dbReference>
<dbReference type="EMBL" id="AY085259">
    <property type="protein sequence ID" value="AAM62491.1"/>
    <property type="molecule type" value="mRNA"/>
</dbReference>
<dbReference type="RefSeq" id="NP_566339.1">
    <property type="nucleotide sequence ID" value="NM_111729.3"/>
</dbReference>
<dbReference type="PDB" id="6N5U">
    <property type="method" value="X-ray"/>
    <property type="resolution" value="2.66 A"/>
    <property type="chains" value="A/B/C=169-334"/>
</dbReference>
<dbReference type="PDBsum" id="6N5U"/>
<dbReference type="SMR" id="Q8VYP0"/>
<dbReference type="BioGRID" id="5380">
    <property type="interactions" value="1"/>
</dbReference>
<dbReference type="FunCoup" id="Q8VYP0">
    <property type="interactions" value="3825"/>
</dbReference>
<dbReference type="IntAct" id="Q8VYP0">
    <property type="interactions" value="1"/>
</dbReference>
<dbReference type="STRING" id="3702.Q8VYP0"/>
<dbReference type="iPTMnet" id="Q8VYP0"/>
<dbReference type="PaxDb" id="3702-AT3G08950.1"/>
<dbReference type="ProteomicsDB" id="232819"/>
<dbReference type="EnsemblPlants" id="AT3G08950.1">
    <property type="protein sequence ID" value="AT3G08950.1"/>
    <property type="gene ID" value="AT3G08950"/>
</dbReference>
<dbReference type="GeneID" id="820046"/>
<dbReference type="Gramene" id="AT3G08950.1">
    <property type="protein sequence ID" value="AT3G08950.1"/>
    <property type="gene ID" value="AT3G08950"/>
</dbReference>
<dbReference type="KEGG" id="ath:AT3G08950"/>
<dbReference type="Araport" id="AT3G08950"/>
<dbReference type="TAIR" id="AT3G08950">
    <property type="gene designation" value="HCC1"/>
</dbReference>
<dbReference type="eggNOG" id="KOG2792">
    <property type="taxonomic scope" value="Eukaryota"/>
</dbReference>
<dbReference type="HOGENOM" id="CLU_050131_0_0_1"/>
<dbReference type="InParanoid" id="Q8VYP0"/>
<dbReference type="OMA" id="MLYFRVE"/>
<dbReference type="PhylomeDB" id="Q8VYP0"/>
<dbReference type="PRO" id="PR:Q8VYP0"/>
<dbReference type="Proteomes" id="UP000006548">
    <property type="component" value="Chromosome 3"/>
</dbReference>
<dbReference type="ExpressionAtlas" id="Q8VYP0">
    <property type="expression patterns" value="baseline and differential"/>
</dbReference>
<dbReference type="GO" id="GO:0005743">
    <property type="term" value="C:mitochondrial inner membrane"/>
    <property type="evidence" value="ECO:0007669"/>
    <property type="project" value="UniProtKB-SubCell"/>
</dbReference>
<dbReference type="GO" id="GO:0005739">
    <property type="term" value="C:mitochondrion"/>
    <property type="evidence" value="ECO:0000314"/>
    <property type="project" value="TAIR"/>
</dbReference>
<dbReference type="GO" id="GO:0005507">
    <property type="term" value="F:copper ion binding"/>
    <property type="evidence" value="ECO:0000314"/>
    <property type="project" value="TAIR"/>
</dbReference>
<dbReference type="GO" id="GO:0009793">
    <property type="term" value="P:embryo development ending in seed dormancy"/>
    <property type="evidence" value="ECO:0000315"/>
    <property type="project" value="UniProtKB"/>
</dbReference>
<dbReference type="GO" id="GO:0033617">
    <property type="term" value="P:mitochondrial cytochrome c oxidase assembly"/>
    <property type="evidence" value="ECO:0000315"/>
    <property type="project" value="UniProtKB"/>
</dbReference>
<dbReference type="CDD" id="cd02968">
    <property type="entry name" value="SCO"/>
    <property type="match status" value="1"/>
</dbReference>
<dbReference type="FunFam" id="3.40.30.10:FF:000013">
    <property type="entry name" value="Blast:Protein SCO1 homolog, mitochondrial"/>
    <property type="match status" value="1"/>
</dbReference>
<dbReference type="Gene3D" id="3.40.30.10">
    <property type="entry name" value="Glutaredoxin"/>
    <property type="match status" value="1"/>
</dbReference>
<dbReference type="InterPro" id="IPR003782">
    <property type="entry name" value="SCO1/SenC"/>
</dbReference>
<dbReference type="InterPro" id="IPR036249">
    <property type="entry name" value="Thioredoxin-like_sf"/>
</dbReference>
<dbReference type="InterPro" id="IPR013766">
    <property type="entry name" value="Thioredoxin_domain"/>
</dbReference>
<dbReference type="PANTHER" id="PTHR12151:SF5">
    <property type="entry name" value="AT19154P"/>
    <property type="match status" value="1"/>
</dbReference>
<dbReference type="PANTHER" id="PTHR12151">
    <property type="entry name" value="ELECTRON TRANSPORT PROTIN SCO1/SENC FAMILY MEMBER"/>
    <property type="match status" value="1"/>
</dbReference>
<dbReference type="Pfam" id="PF02630">
    <property type="entry name" value="SCO1-SenC"/>
    <property type="match status" value="1"/>
</dbReference>
<dbReference type="SUPFAM" id="SSF52833">
    <property type="entry name" value="Thioredoxin-like"/>
    <property type="match status" value="1"/>
</dbReference>
<dbReference type="PROSITE" id="PS51352">
    <property type="entry name" value="THIOREDOXIN_2"/>
    <property type="match status" value="1"/>
</dbReference>
<accession>Q8VYP0</accession>
<accession>Q9SR94</accession>
<feature type="transit peptide" description="Mitochondrion" evidence="1">
    <location>
        <begin position="1"/>
        <end position="13"/>
    </location>
</feature>
<feature type="chain" id="PRO_0000412567" description="Protein SCO1 homolog 1, mitochondrial">
    <location>
        <begin position="14"/>
        <end position="334"/>
    </location>
</feature>
<feature type="transmembrane region" description="Helical" evidence="1">
    <location>
        <begin position="125"/>
        <end position="144"/>
    </location>
</feature>
<feature type="domain" description="Thioredoxin" evidence="2">
    <location>
        <begin position="166"/>
        <end position="331"/>
    </location>
</feature>
<feature type="region of interest" description="Disordered" evidence="3">
    <location>
        <begin position="74"/>
        <end position="120"/>
    </location>
</feature>
<feature type="compositionally biased region" description="Basic and acidic residues" evidence="3">
    <location>
        <begin position="79"/>
        <end position="99"/>
    </location>
</feature>
<feature type="compositionally biased region" description="Basic and acidic residues" evidence="3">
    <location>
        <begin position="107"/>
        <end position="120"/>
    </location>
</feature>
<feature type="binding site" evidence="6 8">
    <location>
        <position position="206"/>
    </location>
    <ligand>
        <name>Cu cation</name>
        <dbReference type="ChEBI" id="CHEBI:23378"/>
    </ligand>
</feature>
<feature type="binding site" evidence="6 8">
    <location>
        <position position="210"/>
    </location>
    <ligand>
        <name>Cu cation</name>
        <dbReference type="ChEBI" id="CHEBI:23378"/>
    </ligand>
</feature>
<feature type="binding site" evidence="6 8">
    <location>
        <position position="295"/>
    </location>
    <ligand>
        <name>Cu cation</name>
        <dbReference type="ChEBI" id="CHEBI:23378"/>
    </ligand>
</feature>
<feature type="strand" evidence="9">
    <location>
        <begin position="178"/>
        <end position="181"/>
    </location>
</feature>
<feature type="strand" evidence="9">
    <location>
        <begin position="186"/>
        <end position="188"/>
    </location>
</feature>
<feature type="helix" evidence="9">
    <location>
        <begin position="189"/>
        <end position="191"/>
    </location>
</feature>
<feature type="strand" evidence="9">
    <location>
        <begin position="195"/>
        <end position="202"/>
    </location>
</feature>
<feature type="helix" evidence="9">
    <location>
        <begin position="209"/>
        <end position="228"/>
    </location>
</feature>
<feature type="strand" evidence="9">
    <location>
        <begin position="232"/>
        <end position="239"/>
    </location>
</feature>
<feature type="turn" evidence="9">
    <location>
        <begin position="241"/>
        <end position="243"/>
    </location>
</feature>
<feature type="helix" evidence="9">
    <location>
        <begin position="246"/>
        <end position="253"/>
    </location>
</feature>
<feature type="turn" evidence="9">
    <location>
        <begin position="254"/>
        <end position="256"/>
    </location>
</feature>
<feature type="strand" evidence="9">
    <location>
        <begin position="261"/>
        <end position="264"/>
    </location>
</feature>
<feature type="helix" evidence="9">
    <location>
        <begin position="267"/>
        <end position="276"/>
    </location>
</feature>
<feature type="strand" evidence="9">
    <location>
        <begin position="281"/>
        <end position="285"/>
    </location>
</feature>
<feature type="strand" evidence="9">
    <location>
        <begin position="287"/>
        <end position="295"/>
    </location>
</feature>
<feature type="strand" evidence="9">
    <location>
        <begin position="299"/>
        <end position="302"/>
    </location>
</feature>
<feature type="strand" evidence="9">
    <location>
        <begin position="308"/>
        <end position="312"/>
    </location>
</feature>
<feature type="helix" evidence="9">
    <location>
        <begin position="318"/>
        <end position="331"/>
    </location>
</feature>
<comment type="function">
    <text evidence="4 5">Thought to play a role in cellular copper homeostasis, mitochondrial redox signaling or insertion of copper into the active site of COX. Plays an essential role in embryo development.</text>
</comment>
<comment type="subcellular location">
    <subcellularLocation>
        <location evidence="4">Mitochondrion inner membrane</location>
        <topology evidence="4">Single-pass membrane protein</topology>
    </subcellularLocation>
</comment>
<comment type="tissue specificity">
    <text evidence="5">Expressed in the whole plant with highest expression in imbibed seeds, embryos, endosperm, and root tips.</text>
</comment>
<comment type="disruption phenotype">
    <text evidence="4 5">Embryos arrested at various developmental stages, mostly at the heart or torpedo stage.</text>
</comment>
<comment type="similarity">
    <text evidence="7">Belongs to the SCO1/2 family.</text>
</comment>
<comment type="sequence caution" evidence="7">
    <conflict type="erroneous gene model prediction">
        <sequence resource="EMBL-CDS" id="AAF07830"/>
    </conflict>
</comment>
<proteinExistence type="evidence at protein level"/>
<sequence length="334" mass="37195">MASALCRTASRLRSVQLFRRIRVSSDLLSASSPSPACISDALRHGDFSLPRSFFSLNCGIEMLKMDQRCLLSTSASDTTSKHDSGKPETKSSEKNEKSGGSESSDGGSDHKNERASGKDVRGGPVSWMSFFLLFATGAGLVYYYDTQKKRHIEDINKNSIAVKEGPSAGKAAIGGPFSLIRDDGKRVTEKNLMGKWTILYFGFTHCPDICPDELIKLAAAIDKIKENSGVDVVPVFISVDPERDTVQQVHEYVKEFHPKLIGLTGSPEEIKSVARSYRVYYMKTEEEDSDYLVDHSIVMYLMSPEMNFVKFYGKNHDVDSLTDGVVKEIRQYRK</sequence>
<keyword id="KW-0002">3D-structure</keyword>
<keyword id="KW-0143">Chaperone</keyword>
<keyword id="KW-0186">Copper</keyword>
<keyword id="KW-0472">Membrane</keyword>
<keyword id="KW-0479">Metal-binding</keyword>
<keyword id="KW-0496">Mitochondrion</keyword>
<keyword id="KW-0999">Mitochondrion inner membrane</keyword>
<keyword id="KW-1185">Reference proteome</keyword>
<keyword id="KW-0809">Transit peptide</keyword>
<keyword id="KW-0812">Transmembrane</keyword>
<keyword id="KW-1133">Transmembrane helix</keyword>
<gene>
    <name type="primary">HCC1</name>
    <name type="synonym">SCO1-1</name>
    <name type="ordered locus">At3g08950</name>
    <name type="ORF">T16O11.9</name>
</gene>
<organism>
    <name type="scientific">Arabidopsis thaliana</name>
    <name type="common">Mouse-ear cress</name>
    <dbReference type="NCBI Taxonomy" id="3702"/>
    <lineage>
        <taxon>Eukaryota</taxon>
        <taxon>Viridiplantae</taxon>
        <taxon>Streptophyta</taxon>
        <taxon>Embryophyta</taxon>
        <taxon>Tracheophyta</taxon>
        <taxon>Spermatophyta</taxon>
        <taxon>Magnoliopsida</taxon>
        <taxon>eudicotyledons</taxon>
        <taxon>Gunneridae</taxon>
        <taxon>Pentapetalae</taxon>
        <taxon>rosids</taxon>
        <taxon>malvids</taxon>
        <taxon>Brassicales</taxon>
        <taxon>Brassicaceae</taxon>
        <taxon>Camelineae</taxon>
        <taxon>Arabidopsis</taxon>
    </lineage>
</organism>
<name>SCO11_ARATH</name>
<protein>
    <recommendedName>
        <fullName>Protein SCO1 homolog 1, mitochondrial</fullName>
    </recommendedName>
    <alternativeName>
        <fullName>Homolog of the copper chaperone SCO1 member 1</fullName>
        <shortName>HCC1</shortName>
    </alternativeName>
</protein>
<reference key="1">
    <citation type="journal article" date="2000" name="Nature">
        <title>Sequence and analysis of chromosome 3 of the plant Arabidopsis thaliana.</title>
        <authorList>
            <person name="Salanoubat M."/>
            <person name="Lemcke K."/>
            <person name="Rieger M."/>
            <person name="Ansorge W."/>
            <person name="Unseld M."/>
            <person name="Fartmann B."/>
            <person name="Valle G."/>
            <person name="Bloecker H."/>
            <person name="Perez-Alonso M."/>
            <person name="Obermaier B."/>
            <person name="Delseny M."/>
            <person name="Boutry M."/>
            <person name="Grivell L.A."/>
            <person name="Mache R."/>
            <person name="Puigdomenech P."/>
            <person name="De Simone V."/>
            <person name="Choisne N."/>
            <person name="Artiguenave F."/>
            <person name="Robert C."/>
            <person name="Brottier P."/>
            <person name="Wincker P."/>
            <person name="Cattolico L."/>
            <person name="Weissenbach J."/>
            <person name="Saurin W."/>
            <person name="Quetier F."/>
            <person name="Schaefer M."/>
            <person name="Mueller-Auer S."/>
            <person name="Gabel C."/>
            <person name="Fuchs M."/>
            <person name="Benes V."/>
            <person name="Wurmbach E."/>
            <person name="Drzonek H."/>
            <person name="Erfle H."/>
            <person name="Jordan N."/>
            <person name="Bangert S."/>
            <person name="Wiedelmann R."/>
            <person name="Kranz H."/>
            <person name="Voss H."/>
            <person name="Holland R."/>
            <person name="Brandt P."/>
            <person name="Nyakatura G."/>
            <person name="Vezzi A."/>
            <person name="D'Angelo M."/>
            <person name="Pallavicini A."/>
            <person name="Toppo S."/>
            <person name="Simionati B."/>
            <person name="Conrad A."/>
            <person name="Hornischer K."/>
            <person name="Kauer G."/>
            <person name="Loehnert T.-H."/>
            <person name="Nordsiek G."/>
            <person name="Reichelt J."/>
            <person name="Scharfe M."/>
            <person name="Schoen O."/>
            <person name="Bargues M."/>
            <person name="Terol J."/>
            <person name="Climent J."/>
            <person name="Navarro P."/>
            <person name="Collado C."/>
            <person name="Perez-Perez A."/>
            <person name="Ottenwaelder B."/>
            <person name="Duchemin D."/>
            <person name="Cooke R."/>
            <person name="Laudie M."/>
            <person name="Berger-Llauro C."/>
            <person name="Purnelle B."/>
            <person name="Masuy D."/>
            <person name="de Haan M."/>
            <person name="Maarse A.C."/>
            <person name="Alcaraz J.-P."/>
            <person name="Cottet A."/>
            <person name="Casacuberta E."/>
            <person name="Monfort A."/>
            <person name="Argiriou A."/>
            <person name="Flores M."/>
            <person name="Liguori R."/>
            <person name="Vitale D."/>
            <person name="Mannhaupt G."/>
            <person name="Haase D."/>
            <person name="Schoof H."/>
            <person name="Rudd S."/>
            <person name="Zaccaria P."/>
            <person name="Mewes H.-W."/>
            <person name="Mayer K.F.X."/>
            <person name="Kaul S."/>
            <person name="Town C.D."/>
            <person name="Koo H.L."/>
            <person name="Tallon L.J."/>
            <person name="Jenkins J."/>
            <person name="Rooney T."/>
            <person name="Rizzo M."/>
            <person name="Walts A."/>
            <person name="Utterback T."/>
            <person name="Fujii C.Y."/>
            <person name="Shea T.P."/>
            <person name="Creasy T.H."/>
            <person name="Haas B."/>
            <person name="Maiti R."/>
            <person name="Wu D."/>
            <person name="Peterson J."/>
            <person name="Van Aken S."/>
            <person name="Pai G."/>
            <person name="Militscher J."/>
            <person name="Sellers P."/>
            <person name="Gill J.E."/>
            <person name="Feldblyum T.V."/>
            <person name="Preuss D."/>
            <person name="Lin X."/>
            <person name="Nierman W.C."/>
            <person name="Salzberg S.L."/>
            <person name="White O."/>
            <person name="Venter J.C."/>
            <person name="Fraser C.M."/>
            <person name="Kaneko T."/>
            <person name="Nakamura Y."/>
            <person name="Sato S."/>
            <person name="Kato T."/>
            <person name="Asamizu E."/>
            <person name="Sasamoto S."/>
            <person name="Kimura T."/>
            <person name="Idesawa K."/>
            <person name="Kawashima K."/>
            <person name="Kishida Y."/>
            <person name="Kiyokawa C."/>
            <person name="Kohara M."/>
            <person name="Matsumoto M."/>
            <person name="Matsuno A."/>
            <person name="Muraki A."/>
            <person name="Nakayama S."/>
            <person name="Nakazaki N."/>
            <person name="Shinpo S."/>
            <person name="Takeuchi C."/>
            <person name="Wada T."/>
            <person name="Watanabe A."/>
            <person name="Yamada M."/>
            <person name="Yasuda M."/>
            <person name="Tabata S."/>
        </authorList>
    </citation>
    <scope>NUCLEOTIDE SEQUENCE [LARGE SCALE GENOMIC DNA]</scope>
    <source>
        <strain>cv. Columbia</strain>
    </source>
</reference>
<reference key="2">
    <citation type="journal article" date="2017" name="Plant J.">
        <title>Araport11: a complete reannotation of the Arabidopsis thaliana reference genome.</title>
        <authorList>
            <person name="Cheng C.Y."/>
            <person name="Krishnakumar V."/>
            <person name="Chan A.P."/>
            <person name="Thibaud-Nissen F."/>
            <person name="Schobel S."/>
            <person name="Town C.D."/>
        </authorList>
    </citation>
    <scope>GENOME REANNOTATION</scope>
    <source>
        <strain>cv. Columbia</strain>
    </source>
</reference>
<reference key="3">
    <citation type="journal article" date="2003" name="Science">
        <title>Empirical analysis of transcriptional activity in the Arabidopsis genome.</title>
        <authorList>
            <person name="Yamada K."/>
            <person name="Lim J."/>
            <person name="Dale J.M."/>
            <person name="Chen H."/>
            <person name="Shinn P."/>
            <person name="Palm C.J."/>
            <person name="Southwick A.M."/>
            <person name="Wu H.C."/>
            <person name="Kim C.J."/>
            <person name="Nguyen M."/>
            <person name="Pham P.K."/>
            <person name="Cheuk R.F."/>
            <person name="Karlin-Newmann G."/>
            <person name="Liu S.X."/>
            <person name="Lam B."/>
            <person name="Sakano H."/>
            <person name="Wu T."/>
            <person name="Yu G."/>
            <person name="Miranda M."/>
            <person name="Quach H.L."/>
            <person name="Tripp M."/>
            <person name="Chang C.H."/>
            <person name="Lee J.M."/>
            <person name="Toriumi M.J."/>
            <person name="Chan M.M."/>
            <person name="Tang C.C."/>
            <person name="Onodera C.S."/>
            <person name="Deng J.M."/>
            <person name="Akiyama K."/>
            <person name="Ansari Y."/>
            <person name="Arakawa T."/>
            <person name="Banh J."/>
            <person name="Banno F."/>
            <person name="Bowser L."/>
            <person name="Brooks S.Y."/>
            <person name="Carninci P."/>
            <person name="Chao Q."/>
            <person name="Choy N."/>
            <person name="Enju A."/>
            <person name="Goldsmith A.D."/>
            <person name="Gurjal M."/>
            <person name="Hansen N.F."/>
            <person name="Hayashizaki Y."/>
            <person name="Johnson-Hopson C."/>
            <person name="Hsuan V.W."/>
            <person name="Iida K."/>
            <person name="Karnes M."/>
            <person name="Khan S."/>
            <person name="Koesema E."/>
            <person name="Ishida J."/>
            <person name="Jiang P.X."/>
            <person name="Jones T."/>
            <person name="Kawai J."/>
            <person name="Kamiya A."/>
            <person name="Meyers C."/>
            <person name="Nakajima M."/>
            <person name="Narusaka M."/>
            <person name="Seki M."/>
            <person name="Sakurai T."/>
            <person name="Satou M."/>
            <person name="Tamse R."/>
            <person name="Vaysberg M."/>
            <person name="Wallender E.K."/>
            <person name="Wong C."/>
            <person name="Yamamura Y."/>
            <person name="Yuan S."/>
            <person name="Shinozaki K."/>
            <person name="Davis R.W."/>
            <person name="Theologis A."/>
            <person name="Ecker J.R."/>
        </authorList>
    </citation>
    <scope>NUCLEOTIDE SEQUENCE [LARGE SCALE MRNA]</scope>
    <source>
        <strain>cv. Columbia</strain>
    </source>
</reference>
<reference key="4">
    <citation type="submission" date="2002-03" db="EMBL/GenBank/DDBJ databases">
        <title>Full-length cDNA from Arabidopsis thaliana.</title>
        <authorList>
            <person name="Brover V.V."/>
            <person name="Troukhan M.E."/>
            <person name="Alexandrov N.A."/>
            <person name="Lu Y.-P."/>
            <person name="Flavell R.B."/>
            <person name="Feldmann K.A."/>
        </authorList>
    </citation>
    <scope>NUCLEOTIDE SEQUENCE [LARGE SCALE MRNA]</scope>
</reference>
<reference key="5">
    <citation type="journal article" date="2011" name="J. Exp. Bot.">
        <title>HCC1, the Arabidopsis homologue of the yeast mitochondrial copper chaperone SCO1, is essential for embryonic development.</title>
        <authorList>
            <person name="Steinebrunner I."/>
            <person name="Landschreiber M."/>
            <person name="Krause-Buchholz U."/>
            <person name="Teichmann J."/>
            <person name="Rodel G."/>
        </authorList>
    </citation>
    <scope>FUNCTION</scope>
    <scope>DISRUPTION PHENOTYPE</scope>
    <scope>SUBCELLULAR LOCATION</scope>
</reference>
<reference key="6">
    <citation type="journal article" date="2011" name="J. Exp. Bot.">
        <title>Plants contain two SCO proteins that are differentially involved in cytochrome c oxidase function and copper and redox homeostasis.</title>
        <authorList>
            <person name="Attallah C.V."/>
            <person name="Welchen E."/>
            <person name="Martin A.P."/>
            <person name="Spinelli S.V."/>
            <person name="Bonnard G."/>
            <person name="Palatnik J.F."/>
            <person name="Gonzalez D.H."/>
        </authorList>
    </citation>
    <scope>FUNCTION</scope>
    <scope>DISRUPTION PHENOTYPE</scope>
    <scope>TISSUE SPECIFICITY</scope>
</reference>
<reference key="7">
    <citation type="journal article" date="2020" name="FEBS J.">
        <title>Arabidopsis thaliana Hcc1 is a Sco-like metallochaperone for CuA assembly in cytochrome c oxidase.</title>
        <authorList>
            <person name="Llases M.E."/>
            <person name="Lisa M.N."/>
            <person name="Morgada M.N."/>
            <person name="Giannini E."/>
            <person name="Alzari P.M."/>
            <person name="Vila A.J."/>
        </authorList>
    </citation>
    <scope>X-RAY CRYSTALLOGRAPHY (2.66 ANGSTROMS) OF 169-334 IN COMPLEX WITH COPPER ION</scope>
</reference>
<evidence type="ECO:0000255" key="1"/>
<evidence type="ECO:0000255" key="2">
    <source>
        <dbReference type="PROSITE-ProRule" id="PRU00691"/>
    </source>
</evidence>
<evidence type="ECO:0000256" key="3">
    <source>
        <dbReference type="SAM" id="MobiDB-lite"/>
    </source>
</evidence>
<evidence type="ECO:0000269" key="4">
    <source>
    </source>
</evidence>
<evidence type="ECO:0000269" key="5">
    <source>
    </source>
</evidence>
<evidence type="ECO:0000269" key="6">
    <source>
    </source>
</evidence>
<evidence type="ECO:0000305" key="7"/>
<evidence type="ECO:0007744" key="8">
    <source>
        <dbReference type="PDB" id="6N5U"/>
    </source>
</evidence>
<evidence type="ECO:0007829" key="9">
    <source>
        <dbReference type="PDB" id="6N5U"/>
    </source>
</evidence>